<comment type="function">
    <text evidence="1">One of the primary rRNA binding proteins, it binds specifically to the 5'-end of 16S ribosomal RNA.</text>
</comment>
<comment type="subunit">
    <text evidence="1">Part of the 30S ribosomal subunit.</text>
</comment>
<comment type="similarity">
    <text evidence="1">Belongs to the universal ribosomal protein uS17 family.</text>
</comment>
<name>RS17_LEUMM</name>
<sequence>MSEERNTRKVYQGRVVSDKMNKTITVAVDTYLTHDVYGKRVKYTKKFKAHDENNAAKQGDIVQIMETRPLSATKHFRLVKIVEEAVIL</sequence>
<organism>
    <name type="scientific">Leuconostoc mesenteroides subsp. mesenteroides (strain ATCC 8293 / DSM 20343 / BCRC 11652 / CCM 1803 / JCM 6124 / NCDO 523 / NBRC 100496 / NCIMB 8023 / NCTC 12954 / NRRL B-1118 / 37Y)</name>
    <dbReference type="NCBI Taxonomy" id="203120"/>
    <lineage>
        <taxon>Bacteria</taxon>
        <taxon>Bacillati</taxon>
        <taxon>Bacillota</taxon>
        <taxon>Bacilli</taxon>
        <taxon>Lactobacillales</taxon>
        <taxon>Lactobacillaceae</taxon>
        <taxon>Leuconostoc</taxon>
    </lineage>
</organism>
<reference key="1">
    <citation type="journal article" date="2006" name="Proc. Natl. Acad. Sci. U.S.A.">
        <title>Comparative genomics of the lactic acid bacteria.</title>
        <authorList>
            <person name="Makarova K.S."/>
            <person name="Slesarev A."/>
            <person name="Wolf Y.I."/>
            <person name="Sorokin A."/>
            <person name="Mirkin B."/>
            <person name="Koonin E.V."/>
            <person name="Pavlov A."/>
            <person name="Pavlova N."/>
            <person name="Karamychev V."/>
            <person name="Polouchine N."/>
            <person name="Shakhova V."/>
            <person name="Grigoriev I."/>
            <person name="Lou Y."/>
            <person name="Rohksar D."/>
            <person name="Lucas S."/>
            <person name="Huang K."/>
            <person name="Goodstein D.M."/>
            <person name="Hawkins T."/>
            <person name="Plengvidhya V."/>
            <person name="Welker D."/>
            <person name="Hughes J."/>
            <person name="Goh Y."/>
            <person name="Benson A."/>
            <person name="Baldwin K."/>
            <person name="Lee J.-H."/>
            <person name="Diaz-Muniz I."/>
            <person name="Dosti B."/>
            <person name="Smeianov V."/>
            <person name="Wechter W."/>
            <person name="Barabote R."/>
            <person name="Lorca G."/>
            <person name="Altermann E."/>
            <person name="Barrangou R."/>
            <person name="Ganesan B."/>
            <person name="Xie Y."/>
            <person name="Rawsthorne H."/>
            <person name="Tamir D."/>
            <person name="Parker C."/>
            <person name="Breidt F."/>
            <person name="Broadbent J.R."/>
            <person name="Hutkins R."/>
            <person name="O'Sullivan D."/>
            <person name="Steele J."/>
            <person name="Unlu G."/>
            <person name="Saier M.H. Jr."/>
            <person name="Klaenhammer T."/>
            <person name="Richardson P."/>
            <person name="Kozyavkin S."/>
            <person name="Weimer B.C."/>
            <person name="Mills D.A."/>
        </authorList>
    </citation>
    <scope>NUCLEOTIDE SEQUENCE [LARGE SCALE GENOMIC DNA]</scope>
    <source>
        <strain>ATCC 8293 / DSM 20343 / BCRC 11652 / CCM 1803 / JCM 6124 / NCDO 523 / NBRC 100496 / NCIMB 8023 / NCTC 12954 / NRRL B-1118 / 37Y</strain>
    </source>
</reference>
<proteinExistence type="inferred from homology"/>
<protein>
    <recommendedName>
        <fullName evidence="1">Small ribosomal subunit protein uS17</fullName>
    </recommendedName>
    <alternativeName>
        <fullName evidence="2">30S ribosomal protein S17</fullName>
    </alternativeName>
</protein>
<keyword id="KW-1185">Reference proteome</keyword>
<keyword id="KW-0687">Ribonucleoprotein</keyword>
<keyword id="KW-0689">Ribosomal protein</keyword>
<keyword id="KW-0694">RNA-binding</keyword>
<keyword id="KW-0699">rRNA-binding</keyword>
<feature type="chain" id="PRO_1000054974" description="Small ribosomal subunit protein uS17">
    <location>
        <begin position="1"/>
        <end position="88"/>
    </location>
</feature>
<evidence type="ECO:0000255" key="1">
    <source>
        <dbReference type="HAMAP-Rule" id="MF_01345"/>
    </source>
</evidence>
<evidence type="ECO:0000305" key="2"/>
<gene>
    <name evidence="1" type="primary">rpsQ</name>
    <name type="ordered locus">LEUM_0205</name>
</gene>
<dbReference type="EMBL" id="CP000414">
    <property type="protein sequence ID" value="ABJ61336.1"/>
    <property type="molecule type" value="Genomic_DNA"/>
</dbReference>
<dbReference type="RefSeq" id="WP_002816027.1">
    <property type="nucleotide sequence ID" value="NC_008531.1"/>
</dbReference>
<dbReference type="SMR" id="Q03ZN6"/>
<dbReference type="EnsemblBacteria" id="ABJ61336">
    <property type="protein sequence ID" value="ABJ61336"/>
    <property type="gene ID" value="LEUM_0205"/>
</dbReference>
<dbReference type="GeneID" id="97504972"/>
<dbReference type="KEGG" id="lme:LEUM_0205"/>
<dbReference type="eggNOG" id="COG0186">
    <property type="taxonomic scope" value="Bacteria"/>
</dbReference>
<dbReference type="HOGENOM" id="CLU_073626_1_0_9"/>
<dbReference type="Proteomes" id="UP000000362">
    <property type="component" value="Chromosome"/>
</dbReference>
<dbReference type="GO" id="GO:0022627">
    <property type="term" value="C:cytosolic small ribosomal subunit"/>
    <property type="evidence" value="ECO:0007669"/>
    <property type="project" value="TreeGrafter"/>
</dbReference>
<dbReference type="GO" id="GO:0019843">
    <property type="term" value="F:rRNA binding"/>
    <property type="evidence" value="ECO:0007669"/>
    <property type="project" value="UniProtKB-UniRule"/>
</dbReference>
<dbReference type="GO" id="GO:0003735">
    <property type="term" value="F:structural constituent of ribosome"/>
    <property type="evidence" value="ECO:0007669"/>
    <property type="project" value="InterPro"/>
</dbReference>
<dbReference type="GO" id="GO:0006412">
    <property type="term" value="P:translation"/>
    <property type="evidence" value="ECO:0007669"/>
    <property type="project" value="UniProtKB-UniRule"/>
</dbReference>
<dbReference type="CDD" id="cd00364">
    <property type="entry name" value="Ribosomal_uS17"/>
    <property type="match status" value="1"/>
</dbReference>
<dbReference type="FunFam" id="2.40.50.140:FF:000026">
    <property type="entry name" value="30S ribosomal protein S17"/>
    <property type="match status" value="1"/>
</dbReference>
<dbReference type="Gene3D" id="2.40.50.140">
    <property type="entry name" value="Nucleic acid-binding proteins"/>
    <property type="match status" value="1"/>
</dbReference>
<dbReference type="HAMAP" id="MF_01345_B">
    <property type="entry name" value="Ribosomal_uS17_B"/>
    <property type="match status" value="1"/>
</dbReference>
<dbReference type="InterPro" id="IPR012340">
    <property type="entry name" value="NA-bd_OB-fold"/>
</dbReference>
<dbReference type="InterPro" id="IPR000266">
    <property type="entry name" value="Ribosomal_uS17"/>
</dbReference>
<dbReference type="InterPro" id="IPR019984">
    <property type="entry name" value="Ribosomal_uS17_bact/chlr"/>
</dbReference>
<dbReference type="InterPro" id="IPR019979">
    <property type="entry name" value="Ribosomal_uS17_CS"/>
</dbReference>
<dbReference type="NCBIfam" id="NF004123">
    <property type="entry name" value="PRK05610.1"/>
    <property type="match status" value="1"/>
</dbReference>
<dbReference type="NCBIfam" id="TIGR03635">
    <property type="entry name" value="uS17_bact"/>
    <property type="match status" value="1"/>
</dbReference>
<dbReference type="PANTHER" id="PTHR10744">
    <property type="entry name" value="40S RIBOSOMAL PROTEIN S11 FAMILY MEMBER"/>
    <property type="match status" value="1"/>
</dbReference>
<dbReference type="PANTHER" id="PTHR10744:SF1">
    <property type="entry name" value="SMALL RIBOSOMAL SUBUNIT PROTEIN US17M"/>
    <property type="match status" value="1"/>
</dbReference>
<dbReference type="Pfam" id="PF00366">
    <property type="entry name" value="Ribosomal_S17"/>
    <property type="match status" value="1"/>
</dbReference>
<dbReference type="PRINTS" id="PR00973">
    <property type="entry name" value="RIBOSOMALS17"/>
</dbReference>
<dbReference type="SUPFAM" id="SSF50249">
    <property type="entry name" value="Nucleic acid-binding proteins"/>
    <property type="match status" value="1"/>
</dbReference>
<dbReference type="PROSITE" id="PS00056">
    <property type="entry name" value="RIBOSOMAL_S17"/>
    <property type="match status" value="1"/>
</dbReference>
<accession>Q03ZN6</accession>